<protein>
    <recommendedName>
        <fullName evidence="1">Acetylglutamate kinase</fullName>
        <ecNumber evidence="1">2.7.2.8</ecNumber>
    </recommendedName>
    <alternativeName>
        <fullName evidence="1">N-acetyl-L-glutamate 5-phosphotransferase</fullName>
    </alternativeName>
    <alternativeName>
        <fullName evidence="1">NAG kinase</fullName>
        <shortName evidence="1">NAGK</shortName>
    </alternativeName>
</protein>
<evidence type="ECO:0000255" key="1">
    <source>
        <dbReference type="HAMAP-Rule" id="MF_00082"/>
    </source>
</evidence>
<reference key="1">
    <citation type="journal article" date="2005" name="Proc. Natl. Acad. Sci. U.S.A.">
        <title>Comparison of the complete genome sequences of Pseudomonas syringae pv. syringae B728a and pv. tomato DC3000.</title>
        <authorList>
            <person name="Feil H."/>
            <person name="Feil W.S."/>
            <person name="Chain P."/>
            <person name="Larimer F."/>
            <person name="Dibartolo G."/>
            <person name="Copeland A."/>
            <person name="Lykidis A."/>
            <person name="Trong S."/>
            <person name="Nolan M."/>
            <person name="Goltsman E."/>
            <person name="Thiel J."/>
            <person name="Malfatti S."/>
            <person name="Loper J.E."/>
            <person name="Lapidus A."/>
            <person name="Detter J.C."/>
            <person name="Land M."/>
            <person name="Richardson P.M."/>
            <person name="Kyrpides N.C."/>
            <person name="Ivanova N."/>
            <person name="Lindow S.E."/>
        </authorList>
    </citation>
    <scope>NUCLEOTIDE SEQUENCE [LARGE SCALE GENOMIC DNA]</scope>
    <source>
        <strain>B728a</strain>
    </source>
</reference>
<organism>
    <name type="scientific">Pseudomonas syringae pv. syringae (strain B728a)</name>
    <dbReference type="NCBI Taxonomy" id="205918"/>
    <lineage>
        <taxon>Bacteria</taxon>
        <taxon>Pseudomonadati</taxon>
        <taxon>Pseudomonadota</taxon>
        <taxon>Gammaproteobacteria</taxon>
        <taxon>Pseudomonadales</taxon>
        <taxon>Pseudomonadaceae</taxon>
        <taxon>Pseudomonas</taxon>
        <taxon>Pseudomonas syringae</taxon>
    </lineage>
</organism>
<sequence length="301" mass="31935">MTLERDAASNVAKVLSEALPYIRRFVGKTLVIKYGGNAMESEELKTGFARDIVLMKAVGINPVVVHGGGPQIGDLLKRLSIESHFIDGMRVTDAQTMDVVEMVLGGQVNKDIVNLINRHGGSAIGLTGKDAELIRAKKLTVTRQTPEMTKPEIIDIGQVGEVVGVNTGLLNMLVKGDFIPVIAPIGVGPDGESYNINADLVAGKVAEALKAEKLILLTNIAGLMNKQGEVLTGLTTEQVDGLIADGTIYGGMLPKIRCALEAVQGGVNSSHIIDGRVPNAVLLEIFTDSGVGTQITNRKRH</sequence>
<keyword id="KW-0028">Amino-acid biosynthesis</keyword>
<keyword id="KW-0055">Arginine biosynthesis</keyword>
<keyword id="KW-0067">ATP-binding</keyword>
<keyword id="KW-0963">Cytoplasm</keyword>
<keyword id="KW-0418">Kinase</keyword>
<keyword id="KW-0547">Nucleotide-binding</keyword>
<keyword id="KW-0808">Transferase</keyword>
<proteinExistence type="inferred from homology"/>
<name>ARGB_PSEU2</name>
<gene>
    <name evidence="1" type="primary">argB</name>
    <name type="ordered locus">Psyr_0218</name>
</gene>
<comment type="function">
    <text evidence="1">Catalyzes the ATP-dependent phosphorylation of N-acetyl-L-glutamate.</text>
</comment>
<comment type="catalytic activity">
    <reaction evidence="1">
        <text>N-acetyl-L-glutamate + ATP = N-acetyl-L-glutamyl 5-phosphate + ADP</text>
        <dbReference type="Rhea" id="RHEA:14629"/>
        <dbReference type="ChEBI" id="CHEBI:30616"/>
        <dbReference type="ChEBI" id="CHEBI:44337"/>
        <dbReference type="ChEBI" id="CHEBI:57936"/>
        <dbReference type="ChEBI" id="CHEBI:456216"/>
        <dbReference type="EC" id="2.7.2.8"/>
    </reaction>
</comment>
<comment type="pathway">
    <text evidence="1">Amino-acid biosynthesis; L-arginine biosynthesis; N(2)-acetyl-L-ornithine from L-glutamate: step 2/4.</text>
</comment>
<comment type="subcellular location">
    <subcellularLocation>
        <location evidence="1">Cytoplasm</location>
    </subcellularLocation>
</comment>
<comment type="similarity">
    <text evidence="1">Belongs to the acetylglutamate kinase family. ArgB subfamily.</text>
</comment>
<dbReference type="EC" id="2.7.2.8" evidence="1"/>
<dbReference type="EMBL" id="CP000075">
    <property type="protein sequence ID" value="AAY35291.1"/>
    <property type="molecule type" value="Genomic_DNA"/>
</dbReference>
<dbReference type="RefSeq" id="WP_002551508.1">
    <property type="nucleotide sequence ID" value="NC_007005.1"/>
</dbReference>
<dbReference type="RefSeq" id="YP_233329.1">
    <property type="nucleotide sequence ID" value="NC_007005.1"/>
</dbReference>
<dbReference type="SMR" id="Q4ZZY1"/>
<dbReference type="STRING" id="205918.Psyr_0218"/>
<dbReference type="GeneID" id="69857271"/>
<dbReference type="KEGG" id="psb:Psyr_0218"/>
<dbReference type="PATRIC" id="fig|205918.7.peg.216"/>
<dbReference type="eggNOG" id="COG0548">
    <property type="taxonomic scope" value="Bacteria"/>
</dbReference>
<dbReference type="HOGENOM" id="CLU_053680_0_0_6"/>
<dbReference type="OrthoDB" id="9803155at2"/>
<dbReference type="UniPathway" id="UPA00068">
    <property type="reaction ID" value="UER00107"/>
</dbReference>
<dbReference type="Proteomes" id="UP000000426">
    <property type="component" value="Chromosome"/>
</dbReference>
<dbReference type="GO" id="GO:0005737">
    <property type="term" value="C:cytoplasm"/>
    <property type="evidence" value="ECO:0007669"/>
    <property type="project" value="UniProtKB-SubCell"/>
</dbReference>
<dbReference type="GO" id="GO:0003991">
    <property type="term" value="F:acetylglutamate kinase activity"/>
    <property type="evidence" value="ECO:0007669"/>
    <property type="project" value="UniProtKB-UniRule"/>
</dbReference>
<dbReference type="GO" id="GO:0005524">
    <property type="term" value="F:ATP binding"/>
    <property type="evidence" value="ECO:0007669"/>
    <property type="project" value="UniProtKB-UniRule"/>
</dbReference>
<dbReference type="GO" id="GO:0042450">
    <property type="term" value="P:arginine biosynthetic process via ornithine"/>
    <property type="evidence" value="ECO:0007669"/>
    <property type="project" value="UniProtKB-UniRule"/>
</dbReference>
<dbReference type="GO" id="GO:0006526">
    <property type="term" value="P:L-arginine biosynthetic process"/>
    <property type="evidence" value="ECO:0007669"/>
    <property type="project" value="UniProtKB-UniPathway"/>
</dbReference>
<dbReference type="CDD" id="cd04250">
    <property type="entry name" value="AAK_NAGK-C"/>
    <property type="match status" value="1"/>
</dbReference>
<dbReference type="FunFam" id="3.40.1160.10:FF:000004">
    <property type="entry name" value="Acetylglutamate kinase"/>
    <property type="match status" value="1"/>
</dbReference>
<dbReference type="Gene3D" id="3.40.1160.10">
    <property type="entry name" value="Acetylglutamate kinase-like"/>
    <property type="match status" value="1"/>
</dbReference>
<dbReference type="HAMAP" id="MF_00082">
    <property type="entry name" value="ArgB"/>
    <property type="match status" value="1"/>
</dbReference>
<dbReference type="InterPro" id="IPR036393">
    <property type="entry name" value="AceGlu_kinase-like_sf"/>
</dbReference>
<dbReference type="InterPro" id="IPR004662">
    <property type="entry name" value="AcgluKinase_fam"/>
</dbReference>
<dbReference type="InterPro" id="IPR037528">
    <property type="entry name" value="ArgB"/>
</dbReference>
<dbReference type="InterPro" id="IPR001048">
    <property type="entry name" value="Asp/Glu/Uridylate_kinase"/>
</dbReference>
<dbReference type="InterPro" id="IPR041727">
    <property type="entry name" value="NAGK-C"/>
</dbReference>
<dbReference type="NCBIfam" id="TIGR00761">
    <property type="entry name" value="argB"/>
    <property type="match status" value="1"/>
</dbReference>
<dbReference type="PANTHER" id="PTHR23342">
    <property type="entry name" value="N-ACETYLGLUTAMATE SYNTHASE"/>
    <property type="match status" value="1"/>
</dbReference>
<dbReference type="PANTHER" id="PTHR23342:SF0">
    <property type="entry name" value="N-ACETYLGLUTAMATE SYNTHASE, MITOCHONDRIAL"/>
    <property type="match status" value="1"/>
</dbReference>
<dbReference type="Pfam" id="PF00696">
    <property type="entry name" value="AA_kinase"/>
    <property type="match status" value="1"/>
</dbReference>
<dbReference type="PIRSF" id="PIRSF000728">
    <property type="entry name" value="NAGK"/>
    <property type="match status" value="1"/>
</dbReference>
<dbReference type="SUPFAM" id="SSF53633">
    <property type="entry name" value="Carbamate kinase-like"/>
    <property type="match status" value="1"/>
</dbReference>
<feature type="chain" id="PRO_0000264737" description="Acetylglutamate kinase">
    <location>
        <begin position="1"/>
        <end position="301"/>
    </location>
</feature>
<feature type="binding site" evidence="1">
    <location>
        <begin position="68"/>
        <end position="69"/>
    </location>
    <ligand>
        <name>substrate</name>
    </ligand>
</feature>
<feature type="binding site" evidence="1">
    <location>
        <position position="90"/>
    </location>
    <ligand>
        <name>substrate</name>
    </ligand>
</feature>
<feature type="binding site" evidence="1">
    <location>
        <position position="195"/>
    </location>
    <ligand>
        <name>substrate</name>
    </ligand>
</feature>
<feature type="site" description="Transition state stabilizer" evidence="1">
    <location>
        <position position="33"/>
    </location>
</feature>
<feature type="site" description="Transition state stabilizer" evidence="1">
    <location>
        <position position="255"/>
    </location>
</feature>
<accession>Q4ZZY1</accession>